<feature type="initiator methionine" description="Removed" evidence="9 11 12 20">
    <location>
        <position position="1"/>
    </location>
</feature>
<feature type="chain" id="PRO_0000203679" description="Guanine nucleotide-binding protein G(i) subunit alpha-2">
    <location>
        <begin position="2"/>
        <end position="355"/>
    </location>
</feature>
<feature type="domain" description="G-alpha" evidence="4">
    <location>
        <begin position="32"/>
        <end position="355"/>
    </location>
</feature>
<feature type="region of interest" description="G1 motif" evidence="4">
    <location>
        <begin position="35"/>
        <end position="48"/>
    </location>
</feature>
<feature type="region of interest" description="G2 motif" evidence="4">
    <location>
        <begin position="174"/>
        <end position="182"/>
    </location>
</feature>
<feature type="region of interest" description="G3 motif" evidence="4">
    <location>
        <begin position="197"/>
        <end position="206"/>
    </location>
</feature>
<feature type="region of interest" description="G4 motif" evidence="4">
    <location>
        <begin position="266"/>
        <end position="273"/>
    </location>
</feature>
<feature type="region of interest" description="G5 motif" evidence="4">
    <location>
        <begin position="325"/>
        <end position="330"/>
    </location>
</feature>
<feature type="binding site" evidence="3">
    <location>
        <begin position="40"/>
        <end position="47"/>
    </location>
    <ligand>
        <name>GTP</name>
        <dbReference type="ChEBI" id="CHEBI:37565"/>
    </ligand>
</feature>
<feature type="binding site" evidence="1">
    <location>
        <position position="47"/>
    </location>
    <ligand>
        <name>Mg(2+)</name>
        <dbReference type="ChEBI" id="CHEBI:18420"/>
    </ligand>
</feature>
<feature type="binding site" evidence="1">
    <location>
        <begin position="176"/>
        <end position="182"/>
    </location>
    <ligand>
        <name>GTP</name>
        <dbReference type="ChEBI" id="CHEBI:37565"/>
    </ligand>
</feature>
<feature type="binding site" evidence="1">
    <location>
        <position position="182"/>
    </location>
    <ligand>
        <name>Mg(2+)</name>
        <dbReference type="ChEBI" id="CHEBI:18420"/>
    </ligand>
</feature>
<feature type="binding site" evidence="3">
    <location>
        <begin position="201"/>
        <end position="205"/>
    </location>
    <ligand>
        <name>GTP</name>
        <dbReference type="ChEBI" id="CHEBI:37565"/>
    </ligand>
</feature>
<feature type="binding site" evidence="3">
    <location>
        <begin position="270"/>
        <end position="273"/>
    </location>
    <ligand>
        <name>GTP</name>
        <dbReference type="ChEBI" id="CHEBI:37565"/>
    </ligand>
</feature>
<feature type="binding site" evidence="1">
    <location>
        <position position="327"/>
    </location>
    <ligand>
        <name>GTP</name>
        <dbReference type="ChEBI" id="CHEBI:37565"/>
    </ligand>
</feature>
<feature type="modified residue" description="ADP-ribosylarginine; by cholera toxin" evidence="1">
    <location>
        <position position="179"/>
    </location>
</feature>
<feature type="modified residue" description="Deamidated glutamine; by Photorhabdus PAU_02230" evidence="10">
    <location>
        <position position="205"/>
    </location>
</feature>
<feature type="modified residue" description="ADP-ribosylcysteine; by pertussis toxin" evidence="1">
    <location>
        <position position="352"/>
    </location>
</feature>
<feature type="lipid moiety-binding region" description="N-myristoyl glycine" evidence="9 11 12">
    <location>
        <position position="2"/>
    </location>
</feature>
<feature type="lipid moiety-binding region" description="S-palmitoyl cysteine" evidence="1">
    <location>
        <position position="3"/>
    </location>
</feature>
<feature type="splice variant" id="VSP_054788" description="In isoform 6." evidence="16">
    <location>
        <begin position="1"/>
        <end position="52"/>
    </location>
</feature>
<feature type="splice variant" id="VSP_017497" description="In isoform 2." evidence="17">
    <original>MGCTVSAEDKAAAERSKMIDKNLREDGEKAAREVKLLLL</original>
    <variation>MEYAGHLPASSAQGTILACTSCT</variation>
    <location>
        <begin position="1"/>
        <end position="39"/>
    </location>
</feature>
<feature type="splice variant" id="VSP_043473" description="In isoform 3." evidence="16">
    <original>MGCTVSAEDKAAAERSKMIDKNLREDGEKAAREVKLLLL</original>
    <variation>MR</variation>
    <location>
        <begin position="1"/>
        <end position="39"/>
    </location>
</feature>
<feature type="splice variant" id="VSP_054789" description="In isoform 5." evidence="16">
    <original>MGCTVSAEDKAAAERSKMIDKNLREDGEKAAREVKLLLL</original>
    <variation>MTEGVKTLGWTKQKGGCHWGRSE</variation>
    <location>
        <begin position="1"/>
        <end position="39"/>
    </location>
</feature>
<feature type="splice variant" id="VSP_043903" description="In isoform sGi2." evidence="18">
    <original>NVQFVFDAVTDVIIKNNLKDCGLF</original>
    <variation>SRKLFRETYLKLSGPDQHPHPSPAPAPPLSSDSVP</variation>
    <location>
        <begin position="332"/>
        <end position="355"/>
    </location>
</feature>
<feature type="helix" evidence="26">
    <location>
        <begin position="7"/>
        <end position="30"/>
    </location>
</feature>
<feature type="strand" evidence="26">
    <location>
        <begin position="33"/>
        <end position="39"/>
    </location>
</feature>
<feature type="strand" evidence="21">
    <location>
        <begin position="42"/>
        <end position="45"/>
    </location>
</feature>
<feature type="helix" evidence="26">
    <location>
        <begin position="46"/>
        <end position="48"/>
    </location>
</feature>
<feature type="turn" evidence="23">
    <location>
        <begin position="51"/>
        <end position="53"/>
    </location>
</feature>
<feature type="strand" evidence="24">
    <location>
        <begin position="186"/>
        <end position="191"/>
    </location>
</feature>
<feature type="strand" evidence="24">
    <location>
        <begin position="196"/>
        <end position="201"/>
    </location>
</feature>
<feature type="turn" evidence="24">
    <location>
        <begin position="209"/>
        <end position="212"/>
    </location>
</feature>
<feature type="helix" evidence="24">
    <location>
        <begin position="213"/>
        <end position="216"/>
    </location>
</feature>
<feature type="strand" evidence="24">
    <location>
        <begin position="220"/>
        <end position="227"/>
    </location>
</feature>
<feature type="helix" evidence="24">
    <location>
        <begin position="228"/>
        <end position="230"/>
    </location>
</feature>
<feature type="strand" evidence="24">
    <location>
        <begin position="231"/>
        <end position="233"/>
    </location>
</feature>
<feature type="turn" evidence="25">
    <location>
        <begin position="236"/>
        <end position="238"/>
    </location>
</feature>
<feature type="strand" evidence="21">
    <location>
        <begin position="239"/>
        <end position="242"/>
    </location>
</feature>
<feature type="helix" evidence="24">
    <location>
        <begin position="243"/>
        <end position="255"/>
    </location>
</feature>
<feature type="helix" evidence="22">
    <location>
        <begin position="258"/>
        <end position="260"/>
    </location>
</feature>
<feature type="strand" evidence="24">
    <location>
        <begin position="264"/>
        <end position="270"/>
    </location>
</feature>
<feature type="turn" evidence="24">
    <location>
        <begin position="273"/>
        <end position="275"/>
    </location>
</feature>
<feature type="helix" evidence="24">
    <location>
        <begin position="276"/>
        <end position="281"/>
    </location>
</feature>
<feature type="turn" evidence="24">
    <location>
        <begin position="285"/>
        <end position="287"/>
    </location>
</feature>
<feature type="strand" evidence="24">
    <location>
        <begin position="296"/>
        <end position="298"/>
    </location>
</feature>
<feature type="turn" evidence="24">
    <location>
        <begin position="299"/>
        <end position="301"/>
    </location>
</feature>
<feature type="helix" evidence="24">
    <location>
        <begin position="302"/>
        <end position="310"/>
    </location>
</feature>
<feature type="turn" evidence="24">
    <location>
        <begin position="315"/>
        <end position="317"/>
    </location>
</feature>
<feature type="strand" evidence="24">
    <location>
        <begin position="320"/>
        <end position="324"/>
    </location>
</feature>
<feature type="turn" evidence="23">
    <location>
        <begin position="329"/>
        <end position="331"/>
    </location>
</feature>
<feature type="helix" evidence="24">
    <location>
        <begin position="332"/>
        <end position="351"/>
    </location>
</feature>
<name>GNAI2_HUMAN</name>
<comment type="function">
    <text evidence="7">Guanine nucleotide-binding proteins (G proteins) are involved as modulators or transducers in various transmembrane signaling systems. The G(i) proteins are involved in hormonal regulation of adenylate cyclase: they inhibit the cyclase in response to beta-adrenergic stimuli. May play a role in cell division.</text>
</comment>
<comment type="function">
    <molecule>Isoform sGi2</molecule>
    <text evidence="6">Regulates the cell surface density of dopamine receptors DRD2 by sequestrating them as an intracellular pool.</text>
</comment>
<comment type="subunit">
    <text evidence="2 5 8 13 14 15">G proteins are composed of 3 units; alpha, beta and gamma. The alpha chain contains the guanine nucleotide binding site. In this context, interacts with GNB2 (PubMed:28219978). Interacts with GPSM1 (By similarity). Interacts with RGS12 and RGS14 (By similarity). Interacts with UNC5B (PubMed:12359238). Interacts (inactive GDP-bound form) with NUCB1 (via GBA motif); the interaction leads to activation of GNAI3 (By similarity). Interacts (inactive GDP-bound form) with CCDC88C/DAPLE (via GBA motif) (PubMed:26126266). Interacts (inactive GDP-bound form) with CCDC8A/GIV (via GBA motif) (PubMed:19211784). Interacts with CXCR1 and CXCR2 (PubMed:8662698).</text>
</comment>
<comment type="interaction">
    <interactant intactId="EBI-353997">
        <id>P04899</id>
    </interactant>
    <interactant intactId="EBI-2835269">
        <id>P32302</id>
        <label>CXCR5</label>
    </interactant>
    <organismsDiffer>false</organismsDiffer>
    <experiments>5</experiments>
</comment>
<comment type="interaction">
    <interactant intactId="EBI-353997">
        <id>P04899</id>
    </interactant>
    <interactant intactId="EBI-357130">
        <id>P62873</id>
        <label>GNB1</label>
    </interactant>
    <organismsDiffer>false</organismsDiffer>
    <experiments>3</experiments>
</comment>
<comment type="interaction">
    <interactant intactId="EBI-353997">
        <id>P04899</id>
    </interactant>
    <interactant intactId="EBI-347538">
        <id>Q9Y4H4</id>
        <label>GPSM3</label>
    </interactant>
    <organismsDiffer>false</organismsDiffer>
    <experiments>3</experiments>
</comment>
<comment type="interaction">
    <interactant intactId="EBI-353997">
        <id>P04899</id>
    </interactant>
    <interactant intactId="EBI-948001">
        <id>Q15323</id>
        <label>KRT31</label>
    </interactant>
    <organismsDiffer>false</organismsDiffer>
    <experiments>3</experiments>
</comment>
<comment type="interaction">
    <interactant intactId="EBI-353997">
        <id>P04899</id>
    </interactant>
    <interactant intactId="EBI-10171697">
        <id>Q6A162</id>
        <label>KRT40</label>
    </interactant>
    <organismsDiffer>false</organismsDiffer>
    <experiments>3</experiments>
</comment>
<comment type="interaction">
    <interactant intactId="EBI-353997">
        <id>P04899</id>
    </interactant>
    <interactant intactId="EBI-10171774">
        <id>P60410</id>
        <label>KRTAP10-8</label>
    </interactant>
    <organismsDiffer>false</organismsDiffer>
    <experiments>3</experiments>
</comment>
<comment type="interaction">
    <interactant intactId="EBI-353997">
        <id>P04899</id>
    </interactant>
    <interactant intactId="EBI-724076">
        <id>Q99750</id>
        <label>MDFI</label>
    </interactant>
    <organismsDiffer>false</organismsDiffer>
    <experiments>5</experiments>
</comment>
<comment type="interaction">
    <interactant intactId="EBI-353997">
        <id>P04899</id>
    </interactant>
    <interactant intactId="EBI-395044">
        <id>P14598</id>
        <label>NCF1</label>
    </interactant>
    <organismsDiffer>false</organismsDiffer>
    <experiments>2</experiments>
</comment>
<comment type="interaction">
    <interactant intactId="EBI-353997">
        <id>P04899</id>
    </interactant>
    <interactant intactId="EBI-489611">
        <id>P19878</id>
        <label>NCF2</label>
    </interactant>
    <organismsDiffer>false</organismsDiffer>
    <experiments>4</experiments>
</comment>
<comment type="interaction">
    <interactant intactId="EBI-353997">
        <id>P04899</id>
    </interactant>
    <interactant intactId="EBI-945833">
        <id>Q7Z3S9</id>
        <label>NOTCH2NLA</label>
    </interactant>
    <organismsDiffer>false</organismsDiffer>
    <experiments>3</experiments>
</comment>
<comment type="interaction">
    <interactant intactId="EBI-353997">
        <id>P04899</id>
    </interactant>
    <interactant intactId="EBI-12250122">
        <id>Q8IVA1</id>
        <label>PCP2</label>
    </interactant>
    <organismsDiffer>false</organismsDiffer>
    <experiments>3</experiments>
</comment>
<comment type="interaction">
    <interactant intactId="EBI-353997">
        <id>P04899</id>
    </interactant>
    <interactant intactId="EBI-10178530">
        <id>O76081-6</id>
        <label>RGS20</label>
    </interactant>
    <organismsDiffer>false</organismsDiffer>
    <experiments>3</experiments>
</comment>
<comment type="interaction">
    <interactant intactId="EBI-353997">
        <id>P04899</id>
    </interactant>
    <interactant intactId="EBI-742327">
        <id>Q15654</id>
        <label>TRIP6</label>
    </interactant>
    <organismsDiffer>false</organismsDiffer>
    <experiments>3</experiments>
</comment>
<comment type="interaction">
    <interactant intactId="EBI-353997">
        <id>P04899</id>
    </interactant>
    <interactant intactId="EBI-5282656">
        <id>P42866</id>
        <label>Oprm1</label>
    </interactant>
    <organismsDiffer>true</organismsDiffer>
    <experiments>2</experiments>
</comment>
<comment type="subcellular location">
    <subcellularLocation>
        <location evidence="7">Cytoplasm</location>
    </subcellularLocation>
    <subcellularLocation>
        <location evidence="7">Cytoplasm</location>
        <location evidence="7">Cytoskeleton</location>
        <location evidence="7">Microtubule organizing center</location>
        <location evidence="7">Centrosome</location>
    </subcellularLocation>
    <subcellularLocation>
        <location evidence="7">Cell membrane</location>
    </subcellularLocation>
    <subcellularLocation>
        <location evidence="19">Membrane</location>
        <topology evidence="19">Lipid-anchor</topology>
    </subcellularLocation>
    <text>Localizes in the centrosomes of interphase and mitotic cells. Detected at the cleavage furrow and/or the midbody.</text>
</comment>
<comment type="alternative products">
    <event type="alternative splicing"/>
    <isoform>
        <id>P04899-1</id>
        <name>1</name>
        <sequence type="displayed"/>
    </isoform>
    <isoform>
        <id>P04899-2</id>
        <name>2</name>
        <sequence type="described" ref="VSP_017497"/>
    </isoform>
    <isoform>
        <id>P04899-3</id>
        <name>3</name>
        <sequence type="described" ref="VSP_043473"/>
    </isoform>
    <isoform>
        <id>P04899-4</id>
        <name>sGi2</name>
        <name>sGalphai2</name>
        <sequence type="described" ref="VSP_043903"/>
    </isoform>
    <isoform>
        <id>P04899-5</id>
        <name>5</name>
        <sequence type="described" ref="VSP_054789"/>
    </isoform>
    <isoform>
        <id>P04899-6</id>
        <name>6</name>
        <sequence type="described" ref="VSP_054788"/>
    </isoform>
</comment>
<comment type="PTM">
    <text evidence="10">(Microbial infection) Deamidated at Gln-205 by Photorhabdus asymbiotica toxin PAU_02230, blocking GTP hydrolysis of heterotrimeric GNAQ or GNA11 and G-alphai (GNAI1, GNAI2 or GNAI3) proteins, thereby activating RhoA.</text>
</comment>
<comment type="similarity">
    <text evidence="19">Belongs to the G-alpha family. G(i/o/t/z) subfamily.</text>
</comment>
<dbReference type="EMBL" id="X04828">
    <property type="protein sequence ID" value="CAA28512.1"/>
    <property type="molecule type" value="mRNA"/>
</dbReference>
<dbReference type="EMBL" id="J03004">
    <property type="protein sequence ID" value="AAA52556.1"/>
    <property type="status" value="ALT_SEQ"/>
    <property type="molecule type" value="mRNA"/>
</dbReference>
<dbReference type="EMBL" id="M20593">
    <property type="protein sequence ID" value="AAA35894.1"/>
    <property type="molecule type" value="Genomic_DNA"/>
</dbReference>
<dbReference type="EMBL" id="M20586">
    <property type="protein sequence ID" value="AAA35894.1"/>
    <property type="status" value="JOINED"/>
    <property type="molecule type" value="Genomic_DNA"/>
</dbReference>
<dbReference type="EMBL" id="M20587">
    <property type="protein sequence ID" value="AAA35894.1"/>
    <property type="status" value="JOINED"/>
    <property type="molecule type" value="Genomic_DNA"/>
</dbReference>
<dbReference type="EMBL" id="M20588">
    <property type="protein sequence ID" value="AAA35894.1"/>
    <property type="status" value="JOINED"/>
    <property type="molecule type" value="Genomic_DNA"/>
</dbReference>
<dbReference type="EMBL" id="M20589">
    <property type="protein sequence ID" value="AAA35894.1"/>
    <property type="status" value="JOINED"/>
    <property type="molecule type" value="Genomic_DNA"/>
</dbReference>
<dbReference type="EMBL" id="M20590">
    <property type="protein sequence ID" value="AAA35894.1"/>
    <property type="status" value="JOINED"/>
    <property type="molecule type" value="Genomic_DNA"/>
</dbReference>
<dbReference type="EMBL" id="M20591">
    <property type="protein sequence ID" value="AAA35894.1"/>
    <property type="status" value="JOINED"/>
    <property type="molecule type" value="Genomic_DNA"/>
</dbReference>
<dbReference type="EMBL" id="M20592">
    <property type="protein sequence ID" value="AAA35894.1"/>
    <property type="status" value="JOINED"/>
    <property type="molecule type" value="Genomic_DNA"/>
</dbReference>
<dbReference type="EMBL" id="AY677118">
    <property type="protein sequence ID" value="AAT78421.1"/>
    <property type="molecule type" value="mRNA"/>
</dbReference>
<dbReference type="EMBL" id="AF493906">
    <property type="protein sequence ID" value="AAM12620.1"/>
    <property type="molecule type" value="mRNA"/>
</dbReference>
<dbReference type="EMBL" id="AK096299">
    <property type="protein sequence ID" value="BAG53252.1"/>
    <property type="molecule type" value="mRNA"/>
</dbReference>
<dbReference type="EMBL" id="AK096595">
    <property type="protein sequence ID" value="BAG53334.1"/>
    <property type="molecule type" value="mRNA"/>
</dbReference>
<dbReference type="EMBL" id="AK302330">
    <property type="protein sequence ID" value="BAG63662.1"/>
    <property type="molecule type" value="mRNA"/>
</dbReference>
<dbReference type="EMBL" id="AK304473">
    <property type="protein sequence ID" value="BAG65287.1"/>
    <property type="molecule type" value="mRNA"/>
</dbReference>
<dbReference type="EMBL" id="AC002077">
    <property type="status" value="NOT_ANNOTATED_CDS"/>
    <property type="molecule type" value="Genomic_DNA"/>
</dbReference>
<dbReference type="EMBL" id="U73166">
    <property type="status" value="NOT_ANNOTATED_CDS"/>
    <property type="molecule type" value="Genomic_DNA"/>
</dbReference>
<dbReference type="EMBL" id="U73169">
    <property type="status" value="NOT_ANNOTATED_CDS"/>
    <property type="molecule type" value="Genomic_DNA"/>
</dbReference>
<dbReference type="EMBL" id="CH471055">
    <property type="protein sequence ID" value="EAW65053.1"/>
    <property type="molecule type" value="Genomic_DNA"/>
</dbReference>
<dbReference type="EMBL" id="CH471055">
    <property type="protein sequence ID" value="EAW65055.1"/>
    <property type="molecule type" value="Genomic_DNA"/>
</dbReference>
<dbReference type="EMBL" id="CH471055">
    <property type="protein sequence ID" value="EAW65056.1"/>
    <property type="molecule type" value="Genomic_DNA"/>
</dbReference>
<dbReference type="EMBL" id="BC012138">
    <property type="protein sequence ID" value="AAH12138.1"/>
    <property type="molecule type" value="mRNA"/>
</dbReference>
<dbReference type="EMBL" id="BC016995">
    <property type="protein sequence ID" value="AAH16995.1"/>
    <property type="molecule type" value="mRNA"/>
</dbReference>
<dbReference type="EMBL" id="X07854">
    <property type="protein sequence ID" value="CAA30703.1"/>
    <property type="molecule type" value="Genomic_DNA"/>
</dbReference>
<dbReference type="CCDS" id="CCDS2813.1">
    <molecule id="P04899-1"/>
</dbReference>
<dbReference type="CCDS" id="CCDS54587.1">
    <molecule id="P04899-3"/>
</dbReference>
<dbReference type="CCDS" id="CCDS63642.1">
    <molecule id="P04899-5"/>
</dbReference>
<dbReference type="CCDS" id="CCDS63644.1">
    <molecule id="P04899-6"/>
</dbReference>
<dbReference type="PIR" id="S02319">
    <property type="entry name" value="RGHUI2"/>
</dbReference>
<dbReference type="RefSeq" id="NP_001159897.1">
    <molecule id="P04899-3"/>
    <property type="nucleotide sequence ID" value="NM_001166425.2"/>
</dbReference>
<dbReference type="RefSeq" id="NP_001269546.1">
    <molecule id="P04899-6"/>
    <property type="nucleotide sequence ID" value="NM_001282617.2"/>
</dbReference>
<dbReference type="RefSeq" id="NP_001269547.1">
    <property type="nucleotide sequence ID" value="NM_001282618.1"/>
</dbReference>
<dbReference type="RefSeq" id="NP_001269548.1">
    <molecule id="P04899-2"/>
    <property type="nucleotide sequence ID" value="NM_001282619.2"/>
</dbReference>
<dbReference type="RefSeq" id="NP_001269549.1">
    <molecule id="P04899-5"/>
    <property type="nucleotide sequence ID" value="NM_001282620.2"/>
</dbReference>
<dbReference type="RefSeq" id="NP_002061.1">
    <molecule id="P04899-1"/>
    <property type="nucleotide sequence ID" value="NM_002070.4"/>
</dbReference>
<dbReference type="RefSeq" id="XP_047303935.1">
    <molecule id="P04899-1"/>
    <property type="nucleotide sequence ID" value="XM_047447979.1"/>
</dbReference>
<dbReference type="RefSeq" id="XP_054202176.1">
    <molecule id="P04899-1"/>
    <property type="nucleotide sequence ID" value="XM_054346201.1"/>
</dbReference>
<dbReference type="PDB" id="6D9H">
    <property type="method" value="EM"/>
    <property type="resolution" value="3.60 A"/>
    <property type="chains" value="A=1-355"/>
</dbReference>
<dbReference type="PDB" id="7F8V">
    <property type="method" value="EM"/>
    <property type="resolution" value="3.30 A"/>
    <property type="chains" value="A=1-355"/>
</dbReference>
<dbReference type="PDB" id="7LD3">
    <property type="method" value="EM"/>
    <property type="resolution" value="3.20 A"/>
    <property type="chains" value="A=1-355"/>
</dbReference>
<dbReference type="PDB" id="7LD4">
    <property type="method" value="EM"/>
    <property type="resolution" value="3.30 A"/>
    <property type="chains" value="A=1-355"/>
</dbReference>
<dbReference type="PDB" id="7WV9">
    <property type="method" value="EM"/>
    <property type="resolution" value="3.36 A"/>
    <property type="chains" value="A=1-355"/>
</dbReference>
<dbReference type="PDB" id="7WVV">
    <property type="method" value="EM"/>
    <property type="resolution" value="2.90 A"/>
    <property type="chains" value="A=1-355"/>
</dbReference>
<dbReference type="PDB" id="7WVW">
    <property type="method" value="EM"/>
    <property type="resolution" value="3.10 A"/>
    <property type="chains" value="A=1-355"/>
</dbReference>
<dbReference type="PDB" id="7WVX">
    <property type="method" value="EM"/>
    <property type="resolution" value="2.80 A"/>
    <property type="chains" value="A=1-355"/>
</dbReference>
<dbReference type="PDB" id="7WVY">
    <property type="method" value="EM"/>
    <property type="resolution" value="3.00 A"/>
    <property type="chains" value="A=1-355"/>
</dbReference>
<dbReference type="PDB" id="7XXI">
    <property type="method" value="EM"/>
    <property type="resolution" value="3.00 A"/>
    <property type="chains" value="B=1-355"/>
</dbReference>
<dbReference type="PDB" id="7YJ4">
    <property type="method" value="EM"/>
    <property type="resolution" value="3.19 A"/>
    <property type="chains" value="I=1-355"/>
</dbReference>
<dbReference type="PDB" id="7YK6">
    <property type="method" value="EM"/>
    <property type="resolution" value="3.03 A"/>
    <property type="chains" value="I=1-355"/>
</dbReference>
<dbReference type="PDB" id="7YK7">
    <property type="method" value="EM"/>
    <property type="resolution" value="2.75 A"/>
    <property type="chains" value="I=1-355"/>
</dbReference>
<dbReference type="PDB" id="8K6M">
    <property type="method" value="EM"/>
    <property type="resolution" value="3.30 A"/>
    <property type="chains" value="A=1-355"/>
</dbReference>
<dbReference type="PDB" id="8K6N">
    <property type="method" value="EM"/>
    <property type="resolution" value="3.20 A"/>
    <property type="chains" value="A=1-355"/>
</dbReference>
<dbReference type="PDB" id="8K6O">
    <property type="method" value="EM"/>
    <property type="resolution" value="3.30 A"/>
    <property type="chains" value="A=1-355"/>
</dbReference>
<dbReference type="PDB" id="8KGG">
    <property type="method" value="EM"/>
    <property type="resolution" value="3.06 A"/>
    <property type="chains" value="A=1-57"/>
</dbReference>
<dbReference type="PDB" id="8THK">
    <property type="method" value="EM"/>
    <property type="resolution" value="2.60 A"/>
    <property type="chains" value="A=1-57"/>
</dbReference>
<dbReference type="PDB" id="8THL">
    <property type="method" value="EM"/>
    <property type="resolution" value="3.10 A"/>
    <property type="chains" value="A=1-57"/>
</dbReference>
<dbReference type="PDB" id="8Y45">
    <property type="method" value="EM"/>
    <property type="resolution" value="3.45 A"/>
    <property type="chains" value="D=1-355"/>
</dbReference>
<dbReference type="PDB" id="8ZSJ">
    <property type="method" value="EM"/>
    <property type="resolution" value="2.80 A"/>
    <property type="chains" value="A=1-182"/>
</dbReference>
<dbReference type="PDB" id="8ZSP">
    <property type="method" value="EM"/>
    <property type="resolution" value="3.14 A"/>
    <property type="chains" value="A=1-182"/>
</dbReference>
<dbReference type="PDB" id="8ZSS">
    <property type="method" value="EM"/>
    <property type="resolution" value="3.07 A"/>
    <property type="chains" value="A=1-182"/>
</dbReference>
<dbReference type="PDB" id="8ZSV">
    <property type="method" value="EM"/>
    <property type="resolution" value="2.96 A"/>
    <property type="chains" value="A=1-182"/>
</dbReference>
<dbReference type="PDBsum" id="6D9H"/>
<dbReference type="PDBsum" id="7F8V"/>
<dbReference type="PDBsum" id="7LD3"/>
<dbReference type="PDBsum" id="7LD4"/>
<dbReference type="PDBsum" id="7WV9"/>
<dbReference type="PDBsum" id="7WVV"/>
<dbReference type="PDBsum" id="7WVW"/>
<dbReference type="PDBsum" id="7WVX"/>
<dbReference type="PDBsum" id="7WVY"/>
<dbReference type="PDBsum" id="7XXI"/>
<dbReference type="PDBsum" id="7YJ4"/>
<dbReference type="PDBsum" id="7YK6"/>
<dbReference type="PDBsum" id="7YK7"/>
<dbReference type="PDBsum" id="8K6M"/>
<dbReference type="PDBsum" id="8K6N"/>
<dbReference type="PDBsum" id="8K6O"/>
<dbReference type="PDBsum" id="8KGG"/>
<dbReference type="PDBsum" id="8THK"/>
<dbReference type="PDBsum" id="8THL"/>
<dbReference type="PDBsum" id="8Y45"/>
<dbReference type="PDBsum" id="8ZSJ"/>
<dbReference type="PDBsum" id="8ZSP"/>
<dbReference type="PDBsum" id="8ZSS"/>
<dbReference type="PDBsum" id="8ZSV"/>
<dbReference type="EMDB" id="EMD-23280"/>
<dbReference type="EMDB" id="EMD-23281"/>
<dbReference type="EMDB" id="EMD-31493"/>
<dbReference type="EMDB" id="EMD-32850"/>
<dbReference type="EMDB" id="EMD-32859"/>
<dbReference type="EMDB" id="EMD-32860"/>
<dbReference type="EMDB" id="EMD-32861"/>
<dbReference type="EMDB" id="EMD-32862"/>
<dbReference type="EMDB" id="EMD-33504"/>
<dbReference type="EMDB" id="EMD-33871"/>
<dbReference type="EMDB" id="EMD-33888"/>
<dbReference type="EMDB" id="EMD-33889"/>
<dbReference type="EMDB" id="EMD-36923"/>
<dbReference type="EMDB" id="EMD-36924"/>
<dbReference type="EMDB" id="EMD-36925"/>
<dbReference type="EMDB" id="EMD-38909"/>
<dbReference type="EMDB" id="EMD-7835"/>
<dbReference type="SMR" id="P04899"/>
<dbReference type="BioGRID" id="109033">
    <property type="interactions" value="251"/>
</dbReference>
<dbReference type="CORUM" id="P04899"/>
<dbReference type="DIP" id="DIP-602N"/>
<dbReference type="FunCoup" id="P04899">
    <property type="interactions" value="3863"/>
</dbReference>
<dbReference type="IntAct" id="P04899">
    <property type="interactions" value="109"/>
</dbReference>
<dbReference type="MINT" id="P04899"/>
<dbReference type="STRING" id="9606.ENSP00000312999"/>
<dbReference type="ChEMBL" id="CHEMBL4105887"/>
<dbReference type="GlyCosmos" id="P04899">
    <property type="glycosylation" value="5 sites, 2 glycans"/>
</dbReference>
<dbReference type="GlyGen" id="P04899">
    <property type="glycosylation" value="5 sites, 2 O-linked glycans (5 sites)"/>
</dbReference>
<dbReference type="iPTMnet" id="P04899"/>
<dbReference type="MetOSite" id="P04899"/>
<dbReference type="PhosphoSitePlus" id="P04899"/>
<dbReference type="SwissPalm" id="P04899"/>
<dbReference type="BioMuta" id="GNAI2"/>
<dbReference type="DMDM" id="121023"/>
<dbReference type="CPTAC" id="CPTAC-1530"/>
<dbReference type="CPTAC" id="CPTAC-1531"/>
<dbReference type="jPOST" id="P04899"/>
<dbReference type="MassIVE" id="P04899"/>
<dbReference type="PaxDb" id="9606-ENSP00000312999"/>
<dbReference type="PeptideAtlas" id="P04899"/>
<dbReference type="PRIDE" id="P04899"/>
<dbReference type="ProteomicsDB" id="3695"/>
<dbReference type="ProteomicsDB" id="51752">
    <molecule id="P04899-1"/>
</dbReference>
<dbReference type="ProteomicsDB" id="51753">
    <molecule id="P04899-2"/>
</dbReference>
<dbReference type="ProteomicsDB" id="51754">
    <molecule id="P04899-3"/>
</dbReference>
<dbReference type="ProteomicsDB" id="51755">
    <molecule id="P04899-4"/>
</dbReference>
<dbReference type="ProteomicsDB" id="5863"/>
<dbReference type="Pumba" id="P04899"/>
<dbReference type="Antibodypedia" id="2180">
    <property type="antibodies" value="298 antibodies from 35 providers"/>
</dbReference>
<dbReference type="DNASU" id="2771"/>
<dbReference type="Ensembl" id="ENST00000266027.9">
    <molecule id="P04899-6"/>
    <property type="protein sequence ID" value="ENSP00000266027.6"/>
    <property type="gene ID" value="ENSG00000114353.17"/>
</dbReference>
<dbReference type="Ensembl" id="ENST00000313601.11">
    <molecule id="P04899-1"/>
    <property type="protein sequence ID" value="ENSP00000312999.6"/>
    <property type="gene ID" value="ENSG00000114353.17"/>
</dbReference>
<dbReference type="Ensembl" id="ENST00000422163.5">
    <molecule id="P04899-5"/>
    <property type="protein sequence ID" value="ENSP00000406871.1"/>
    <property type="gene ID" value="ENSG00000114353.17"/>
</dbReference>
<dbReference type="Ensembl" id="ENST00000440628.5">
    <molecule id="P04899-6"/>
    <property type="protein sequence ID" value="ENSP00000395736.1"/>
    <property type="gene ID" value="ENSG00000114353.17"/>
</dbReference>
<dbReference type="Ensembl" id="ENST00000451956.1">
    <molecule id="P04899-3"/>
    <property type="protein sequence ID" value="ENSP00000406369.1"/>
    <property type="gene ID" value="ENSG00000114353.17"/>
</dbReference>
<dbReference type="GeneID" id="2771"/>
<dbReference type="KEGG" id="hsa:2771"/>
<dbReference type="MANE-Select" id="ENST00000313601.11">
    <property type="protein sequence ID" value="ENSP00000312999.6"/>
    <property type="RefSeq nucleotide sequence ID" value="NM_002070.4"/>
    <property type="RefSeq protein sequence ID" value="NP_002061.1"/>
</dbReference>
<dbReference type="UCSC" id="uc003cyp.3">
    <molecule id="P04899-1"/>
    <property type="organism name" value="human"/>
</dbReference>
<dbReference type="AGR" id="HGNC:4385"/>
<dbReference type="CTD" id="2771"/>
<dbReference type="DisGeNET" id="2771"/>
<dbReference type="GeneCards" id="GNAI2"/>
<dbReference type="HGNC" id="HGNC:4385">
    <property type="gene designation" value="GNAI2"/>
</dbReference>
<dbReference type="HPA" id="ENSG00000114353">
    <property type="expression patterns" value="Low tissue specificity"/>
</dbReference>
<dbReference type="MalaCards" id="GNAI2"/>
<dbReference type="MIM" id="139360">
    <property type="type" value="gene"/>
</dbReference>
<dbReference type="neXtProt" id="NX_P04899"/>
<dbReference type="OpenTargets" id="ENSG00000114353"/>
<dbReference type="PharmGKB" id="PA24347"/>
<dbReference type="VEuPathDB" id="HostDB:ENSG00000114353"/>
<dbReference type="eggNOG" id="KOG0082">
    <property type="taxonomic scope" value="Eukaryota"/>
</dbReference>
<dbReference type="GeneTree" id="ENSGT00940000155125"/>
<dbReference type="HOGENOM" id="CLU_014184_6_0_1"/>
<dbReference type="InParanoid" id="P04899"/>
<dbReference type="OMA" id="CPITICF"/>
<dbReference type="OrthoDB" id="5817230at2759"/>
<dbReference type="PAN-GO" id="P04899">
    <property type="GO annotations" value="7 GO annotations based on evolutionary models"/>
</dbReference>
<dbReference type="PhylomeDB" id="P04899"/>
<dbReference type="TreeFam" id="TF300673"/>
<dbReference type="PathwayCommons" id="P04899"/>
<dbReference type="Reactome" id="R-HSA-170670">
    <property type="pathway name" value="Adenylate cyclase inhibitory pathway"/>
</dbReference>
<dbReference type="Reactome" id="R-HSA-392170">
    <property type="pathway name" value="ADP signalling through P2Y purinoceptor 12"/>
</dbReference>
<dbReference type="Reactome" id="R-HSA-400042">
    <property type="pathway name" value="Adrenaline,noradrenaline inhibits insulin secretion"/>
</dbReference>
<dbReference type="Reactome" id="R-HSA-418555">
    <property type="pathway name" value="G alpha (s) signalling events"/>
</dbReference>
<dbReference type="Reactome" id="R-HSA-418594">
    <property type="pathway name" value="G alpha (i) signalling events"/>
</dbReference>
<dbReference type="Reactome" id="R-HSA-418597">
    <property type="pathway name" value="G alpha (z) signalling events"/>
</dbReference>
<dbReference type="Reactome" id="R-HSA-422356">
    <property type="pathway name" value="Regulation of insulin secretion"/>
</dbReference>
<dbReference type="Reactome" id="R-HSA-9009391">
    <property type="pathway name" value="Extra-nuclear estrogen signaling"/>
</dbReference>
<dbReference type="Reactome" id="R-HSA-9634597">
    <property type="pathway name" value="GPER1 signaling"/>
</dbReference>
<dbReference type="Reactome" id="R-HSA-9660821">
    <property type="pathway name" value="ADORA2B mediated anti-inflammatory cytokines production"/>
</dbReference>
<dbReference type="SignaLink" id="P04899"/>
<dbReference type="SIGNOR" id="P04899"/>
<dbReference type="BioGRID-ORCS" id="2771">
    <property type="hits" value="35 hits in 1158 CRISPR screens"/>
</dbReference>
<dbReference type="CD-CODE" id="8C2F96ED">
    <property type="entry name" value="Centrosome"/>
</dbReference>
<dbReference type="CD-CODE" id="FB4E32DD">
    <property type="entry name" value="Presynaptic clusters and postsynaptic densities"/>
</dbReference>
<dbReference type="ChiTaRS" id="GNAI2">
    <property type="organism name" value="human"/>
</dbReference>
<dbReference type="GeneWiki" id="GNAI2"/>
<dbReference type="GenomeRNAi" id="2771"/>
<dbReference type="Pharos" id="P04899">
    <property type="development level" value="Tchem"/>
</dbReference>
<dbReference type="PRO" id="PR:P04899"/>
<dbReference type="Proteomes" id="UP000005640">
    <property type="component" value="Chromosome 3"/>
</dbReference>
<dbReference type="RNAct" id="P04899">
    <property type="molecule type" value="protein"/>
</dbReference>
<dbReference type="Bgee" id="ENSG00000114353">
    <property type="expression patterns" value="Expressed in granulocyte and 203 other cell types or tissues"/>
</dbReference>
<dbReference type="ExpressionAtlas" id="P04899">
    <property type="expression patterns" value="baseline and differential"/>
</dbReference>
<dbReference type="GO" id="GO:0044297">
    <property type="term" value="C:cell body"/>
    <property type="evidence" value="ECO:0007669"/>
    <property type="project" value="Ensembl"/>
</dbReference>
<dbReference type="GO" id="GO:0005813">
    <property type="term" value="C:centrosome"/>
    <property type="evidence" value="ECO:0000314"/>
    <property type="project" value="UniProtKB"/>
</dbReference>
<dbReference type="GO" id="GO:0036064">
    <property type="term" value="C:ciliary basal body"/>
    <property type="evidence" value="ECO:0000314"/>
    <property type="project" value="HPA"/>
</dbReference>
<dbReference type="GO" id="GO:0005737">
    <property type="term" value="C:cytoplasm"/>
    <property type="evidence" value="ECO:0000314"/>
    <property type="project" value="UniProtKB"/>
</dbReference>
<dbReference type="GO" id="GO:0005829">
    <property type="term" value="C:cytosol"/>
    <property type="evidence" value="ECO:0000314"/>
    <property type="project" value="HPA"/>
</dbReference>
<dbReference type="GO" id="GO:0030425">
    <property type="term" value="C:dendrite"/>
    <property type="evidence" value="ECO:0007669"/>
    <property type="project" value="Ensembl"/>
</dbReference>
<dbReference type="GO" id="GO:0070062">
    <property type="term" value="C:extracellular exosome"/>
    <property type="evidence" value="ECO:0007005"/>
    <property type="project" value="UniProtKB"/>
</dbReference>
<dbReference type="GO" id="GO:1903561">
    <property type="term" value="C:extracellular vesicle"/>
    <property type="evidence" value="ECO:0007005"/>
    <property type="project" value="UniProtKB"/>
</dbReference>
<dbReference type="GO" id="GO:0005834">
    <property type="term" value="C:heterotrimeric G-protein complex"/>
    <property type="evidence" value="ECO:0000318"/>
    <property type="project" value="GO_Central"/>
</dbReference>
<dbReference type="GO" id="GO:0098686">
    <property type="term" value="C:hippocampal mossy fiber to CA3 synapse"/>
    <property type="evidence" value="ECO:0007669"/>
    <property type="project" value="Ensembl"/>
</dbReference>
<dbReference type="GO" id="GO:0016020">
    <property type="term" value="C:membrane"/>
    <property type="evidence" value="ECO:0007005"/>
    <property type="project" value="UniProtKB"/>
</dbReference>
<dbReference type="GO" id="GO:0030496">
    <property type="term" value="C:midbody"/>
    <property type="evidence" value="ECO:0000314"/>
    <property type="project" value="UniProtKB"/>
</dbReference>
<dbReference type="GO" id="GO:0098992">
    <property type="term" value="C:neuronal dense core vesicle"/>
    <property type="evidence" value="ECO:0007669"/>
    <property type="project" value="Ensembl"/>
</dbReference>
<dbReference type="GO" id="GO:0005654">
    <property type="term" value="C:nucleoplasm"/>
    <property type="evidence" value="ECO:0000314"/>
    <property type="project" value="HPA"/>
</dbReference>
<dbReference type="GO" id="GO:0005886">
    <property type="term" value="C:plasma membrane"/>
    <property type="evidence" value="ECO:0000314"/>
    <property type="project" value="HPA"/>
</dbReference>
<dbReference type="GO" id="GO:0001664">
    <property type="term" value="F:G protein-coupled receptor binding"/>
    <property type="evidence" value="ECO:0000318"/>
    <property type="project" value="GO_Central"/>
</dbReference>
<dbReference type="GO" id="GO:0031683">
    <property type="term" value="F:G-protein beta/gamma-subunit complex binding"/>
    <property type="evidence" value="ECO:0000318"/>
    <property type="project" value="GO_Central"/>
</dbReference>
<dbReference type="GO" id="GO:0005525">
    <property type="term" value="F:GTP binding"/>
    <property type="evidence" value="ECO:0007669"/>
    <property type="project" value="UniProtKB-KW"/>
</dbReference>
<dbReference type="GO" id="GO:0003924">
    <property type="term" value="F:GTPase activity"/>
    <property type="evidence" value="ECO:0000318"/>
    <property type="project" value="GO_Central"/>
</dbReference>
<dbReference type="GO" id="GO:0046872">
    <property type="term" value="F:metal ion binding"/>
    <property type="evidence" value="ECO:0007669"/>
    <property type="project" value="UniProtKB-KW"/>
</dbReference>
<dbReference type="GO" id="GO:0007189">
    <property type="term" value="P:adenylate cyclase-activating G protein-coupled receptor signaling pathway"/>
    <property type="evidence" value="ECO:0007669"/>
    <property type="project" value="Ensembl"/>
</dbReference>
<dbReference type="GO" id="GO:0007193">
    <property type="term" value="P:adenylate cyclase-inhibiting G protein-coupled receptor signaling pathway"/>
    <property type="evidence" value="ECO:0000318"/>
    <property type="project" value="GO_Central"/>
</dbReference>
<dbReference type="GO" id="GO:0051301">
    <property type="term" value="P:cell division"/>
    <property type="evidence" value="ECO:0000315"/>
    <property type="project" value="UniProtKB"/>
</dbReference>
<dbReference type="GO" id="GO:0008283">
    <property type="term" value="P:cell population proliferation"/>
    <property type="evidence" value="ECO:0007669"/>
    <property type="project" value="Ensembl"/>
</dbReference>
<dbReference type="GO" id="GO:0007213">
    <property type="term" value="P:G protein-coupled acetylcholine receptor signaling pathway"/>
    <property type="evidence" value="ECO:0007669"/>
    <property type="project" value="Ensembl"/>
</dbReference>
<dbReference type="GO" id="GO:0001973">
    <property type="term" value="P:G protein-coupled adenosine receptor signaling pathway"/>
    <property type="evidence" value="ECO:0000318"/>
    <property type="project" value="GO_Central"/>
</dbReference>
<dbReference type="GO" id="GO:0007186">
    <property type="term" value="P:G protein-coupled receptor signaling pathway"/>
    <property type="evidence" value="ECO:0000304"/>
    <property type="project" value="ProtInc"/>
</dbReference>
<dbReference type="GO" id="GO:0007214">
    <property type="term" value="P:gamma-aminobutyric acid signaling pathway"/>
    <property type="evidence" value="ECO:0000318"/>
    <property type="project" value="GO_Central"/>
</dbReference>
<dbReference type="GO" id="GO:0007194">
    <property type="term" value="P:negative regulation of adenylate cyclase activity"/>
    <property type="evidence" value="ECO:0000304"/>
    <property type="project" value="ProtInc"/>
</dbReference>
<dbReference type="GO" id="GO:0071878">
    <property type="term" value="P:negative regulation of adenylate cyclase-activating adrenergic receptor signaling pathway"/>
    <property type="evidence" value="ECO:0007669"/>
    <property type="project" value="Ensembl"/>
</dbReference>
<dbReference type="GO" id="GO:2001234">
    <property type="term" value="P:negative regulation of apoptotic signaling pathway"/>
    <property type="evidence" value="ECO:0007669"/>
    <property type="project" value="Ensembl"/>
</dbReference>
<dbReference type="GO" id="GO:0045955">
    <property type="term" value="P:negative regulation of calcium ion-dependent exocytosis"/>
    <property type="evidence" value="ECO:0007669"/>
    <property type="project" value="Ensembl"/>
</dbReference>
<dbReference type="GO" id="GO:0050805">
    <property type="term" value="P:negative regulation of synaptic transmission"/>
    <property type="evidence" value="ECO:0007669"/>
    <property type="project" value="Ensembl"/>
</dbReference>
<dbReference type="GO" id="GO:0030335">
    <property type="term" value="P:positive regulation of cell migration"/>
    <property type="evidence" value="ECO:0007669"/>
    <property type="project" value="Ensembl"/>
</dbReference>
<dbReference type="GO" id="GO:0008284">
    <property type="term" value="P:positive regulation of cell population proliferation"/>
    <property type="evidence" value="ECO:0000315"/>
    <property type="project" value="BHF-UCL"/>
</dbReference>
<dbReference type="GO" id="GO:0070374">
    <property type="term" value="P:positive regulation of ERK1 and ERK2 cascade"/>
    <property type="evidence" value="ECO:0007669"/>
    <property type="project" value="Ensembl"/>
</dbReference>
<dbReference type="GO" id="GO:2000179">
    <property type="term" value="P:positive regulation of neural precursor cell proliferation"/>
    <property type="evidence" value="ECO:0007669"/>
    <property type="project" value="Ensembl"/>
</dbReference>
<dbReference type="GO" id="GO:0032930">
    <property type="term" value="P:positive regulation of superoxide anion generation"/>
    <property type="evidence" value="ECO:0007669"/>
    <property type="project" value="Ensembl"/>
</dbReference>
<dbReference type="GO" id="GO:0035810">
    <property type="term" value="P:positive regulation of urine volume"/>
    <property type="evidence" value="ECO:0007669"/>
    <property type="project" value="Ensembl"/>
</dbReference>
<dbReference type="GO" id="GO:1904707">
    <property type="term" value="P:positive regulation of vascular associated smooth muscle cell proliferation"/>
    <property type="evidence" value="ECO:0007669"/>
    <property type="project" value="Ensembl"/>
</dbReference>
<dbReference type="GO" id="GO:0051924">
    <property type="term" value="P:regulation of calcium ion transport"/>
    <property type="evidence" value="ECO:0007669"/>
    <property type="project" value="Ensembl"/>
</dbReference>
<dbReference type="GO" id="GO:0007584">
    <property type="term" value="P:response to nutrient"/>
    <property type="evidence" value="ECO:0000304"/>
    <property type="project" value="ProtInc"/>
</dbReference>
<dbReference type="GO" id="GO:0007165">
    <property type="term" value="P:signal transduction"/>
    <property type="evidence" value="ECO:0000304"/>
    <property type="project" value="ProtInc"/>
</dbReference>
<dbReference type="CDD" id="cd00066">
    <property type="entry name" value="G-alpha"/>
    <property type="match status" value="1"/>
</dbReference>
<dbReference type="FunFam" id="1.10.400.10:FF:000001">
    <property type="entry name" value="Guanine nucleotide-binding protein G(I) subunit alpha"/>
    <property type="match status" value="1"/>
</dbReference>
<dbReference type="FunFam" id="3.40.50.300:FF:002487">
    <property type="entry name" value="Guanine nucleotide-binding protein G(i) subunit alpha-1"/>
    <property type="match status" value="1"/>
</dbReference>
<dbReference type="FunFam" id="3.40.50.300:FF:003559">
    <property type="entry name" value="Guanine nucleotide-binding protein G(i) subunit alpha-1"/>
    <property type="match status" value="1"/>
</dbReference>
<dbReference type="Gene3D" id="1.10.400.10">
    <property type="entry name" value="GI Alpha 1, domain 2-like"/>
    <property type="match status" value="1"/>
</dbReference>
<dbReference type="Gene3D" id="3.40.50.300">
    <property type="entry name" value="P-loop containing nucleotide triphosphate hydrolases"/>
    <property type="match status" value="1"/>
</dbReference>
<dbReference type="InterPro" id="IPR001408">
    <property type="entry name" value="Gprotein_alpha_I"/>
</dbReference>
<dbReference type="InterPro" id="IPR001019">
    <property type="entry name" value="Gprotein_alpha_su"/>
</dbReference>
<dbReference type="InterPro" id="IPR011025">
    <property type="entry name" value="GproteinA_insert"/>
</dbReference>
<dbReference type="InterPro" id="IPR027417">
    <property type="entry name" value="P-loop_NTPase"/>
</dbReference>
<dbReference type="PANTHER" id="PTHR10218">
    <property type="entry name" value="GTP-BINDING PROTEIN ALPHA SUBUNIT"/>
    <property type="match status" value="1"/>
</dbReference>
<dbReference type="PANTHER" id="PTHR10218:SF73">
    <property type="entry name" value="GUANINE NUCLEOTIDE-BINDING PROTEIN G(I) SUBUNIT ALPHA-2"/>
    <property type="match status" value="1"/>
</dbReference>
<dbReference type="Pfam" id="PF00503">
    <property type="entry name" value="G-alpha"/>
    <property type="match status" value="1"/>
</dbReference>
<dbReference type="PRINTS" id="PR00318">
    <property type="entry name" value="GPROTEINA"/>
</dbReference>
<dbReference type="PRINTS" id="PR00441">
    <property type="entry name" value="GPROTEINAI"/>
</dbReference>
<dbReference type="SMART" id="SM00275">
    <property type="entry name" value="G_alpha"/>
    <property type="match status" value="1"/>
</dbReference>
<dbReference type="SUPFAM" id="SSF52540">
    <property type="entry name" value="P-loop containing nucleoside triphosphate hydrolases"/>
    <property type="match status" value="1"/>
</dbReference>
<dbReference type="SUPFAM" id="SSF47895">
    <property type="entry name" value="Transducin (alpha subunit), insertion domain"/>
    <property type="match status" value="1"/>
</dbReference>
<dbReference type="PROSITE" id="PS51882">
    <property type="entry name" value="G_ALPHA"/>
    <property type="match status" value="1"/>
</dbReference>
<accession>P04899</accession>
<accession>B3KTZ0</accession>
<accession>B4DYA0</accession>
<accession>B4E2X5</accession>
<accession>Q6B6N3</accession>
<accession>Q8IZ71</accession>
<sequence>MGCTVSAEDKAAAERSKMIDKNLREDGEKAAREVKLLLLGAGESGKSTIVKQMKIIHEDGYSEEECRQYRAVVYSNTIQSIMAIVKAMGNLQIDFADPSRADDARQLFALSCTAEEQGVLPDDLSGVIRRLWADHGVQACFGRSREYQLNDSAAYYLNDLERIAQSDYIPTQQDVLRTRVKTTGIVETHFTFKDLHFKMFDVGGQRSERKKWIHCFEGVTAIIFCVALSAYDLVLAEDEEMNRMHESMKLFDSICNNKWFTDTSIILFLNKKDLFEEKITHSPLTICFPEYTGANKYDEAASYIQSKFEDLNKRKDTKEIYTHFTCATDTKNVQFVFDAVTDVIIKNNLKDCGLF</sequence>
<evidence type="ECO:0000250" key="1"/>
<evidence type="ECO:0000250" key="2">
    <source>
        <dbReference type="UniProtKB" id="P04897"/>
    </source>
</evidence>
<evidence type="ECO:0000250" key="3">
    <source>
        <dbReference type="UniProtKB" id="P63096"/>
    </source>
</evidence>
<evidence type="ECO:0000255" key="4">
    <source>
        <dbReference type="PROSITE-ProRule" id="PRU01230"/>
    </source>
</evidence>
<evidence type="ECO:0000269" key="5">
    <source>
    </source>
</evidence>
<evidence type="ECO:0000269" key="6">
    <source>
    </source>
</evidence>
<evidence type="ECO:0000269" key="7">
    <source>
    </source>
</evidence>
<evidence type="ECO:0000269" key="8">
    <source>
    </source>
</evidence>
<evidence type="ECO:0000269" key="9">
    <source>
    </source>
</evidence>
<evidence type="ECO:0000269" key="10">
    <source>
    </source>
</evidence>
<evidence type="ECO:0000269" key="11">
    <source>
    </source>
</evidence>
<evidence type="ECO:0000269" key="12">
    <source>
    </source>
</evidence>
<evidence type="ECO:0000269" key="13">
    <source>
    </source>
</evidence>
<evidence type="ECO:0000269" key="14">
    <source>
    </source>
</evidence>
<evidence type="ECO:0000269" key="15">
    <source>
    </source>
</evidence>
<evidence type="ECO:0000303" key="16">
    <source>
    </source>
</evidence>
<evidence type="ECO:0000303" key="17">
    <source>
    </source>
</evidence>
<evidence type="ECO:0000303" key="18">
    <source>
    </source>
</evidence>
<evidence type="ECO:0000305" key="19"/>
<evidence type="ECO:0007744" key="20">
    <source>
    </source>
</evidence>
<evidence type="ECO:0007829" key="21">
    <source>
        <dbReference type="PDB" id="7WVV"/>
    </source>
</evidence>
<evidence type="ECO:0007829" key="22">
    <source>
        <dbReference type="PDB" id="7WVX"/>
    </source>
</evidence>
<evidence type="ECO:0007829" key="23">
    <source>
        <dbReference type="PDB" id="7XXI"/>
    </source>
</evidence>
<evidence type="ECO:0007829" key="24">
    <source>
        <dbReference type="PDB" id="7YK7"/>
    </source>
</evidence>
<evidence type="ECO:0007829" key="25">
    <source>
        <dbReference type="PDB" id="8K6N"/>
    </source>
</evidence>
<evidence type="ECO:0007829" key="26">
    <source>
        <dbReference type="PDB" id="8THK"/>
    </source>
</evidence>
<gene>
    <name type="primary">GNAI2</name>
    <name type="synonym">GNAI2B</name>
</gene>
<keyword id="KW-0002">3D-structure</keyword>
<keyword id="KW-0013">ADP-ribosylation</keyword>
<keyword id="KW-0025">Alternative splicing</keyword>
<keyword id="KW-0131">Cell cycle</keyword>
<keyword id="KW-0132">Cell division</keyword>
<keyword id="KW-1003">Cell membrane</keyword>
<keyword id="KW-0963">Cytoplasm</keyword>
<keyword id="KW-0206">Cytoskeleton</keyword>
<keyword id="KW-0342">GTP-binding</keyword>
<keyword id="KW-0449">Lipoprotein</keyword>
<keyword id="KW-0460">Magnesium</keyword>
<keyword id="KW-0472">Membrane</keyword>
<keyword id="KW-0479">Metal-binding</keyword>
<keyword id="KW-0519">Myristate</keyword>
<keyword id="KW-0547">Nucleotide-binding</keyword>
<keyword id="KW-0564">Palmitate</keyword>
<keyword id="KW-1267">Proteomics identification</keyword>
<keyword id="KW-1185">Reference proteome</keyword>
<keyword id="KW-0807">Transducer</keyword>
<proteinExistence type="evidence at protein level"/>
<organism>
    <name type="scientific">Homo sapiens</name>
    <name type="common">Human</name>
    <dbReference type="NCBI Taxonomy" id="9606"/>
    <lineage>
        <taxon>Eukaryota</taxon>
        <taxon>Metazoa</taxon>
        <taxon>Chordata</taxon>
        <taxon>Craniata</taxon>
        <taxon>Vertebrata</taxon>
        <taxon>Euteleostomi</taxon>
        <taxon>Mammalia</taxon>
        <taxon>Eutheria</taxon>
        <taxon>Euarchontoglires</taxon>
        <taxon>Primates</taxon>
        <taxon>Haplorrhini</taxon>
        <taxon>Catarrhini</taxon>
        <taxon>Hominidae</taxon>
        <taxon>Homo</taxon>
    </lineage>
</organism>
<reference key="1">
    <citation type="journal article" date="1987" name="FEBS Lett.">
        <title>Human Gi protein alpha-subunit: deduction of amino acid structure from a cloned cDNA.</title>
        <authorList>
            <person name="Didsbury J.R."/>
            <person name="Ho Y.-S."/>
            <person name="Snyderman R."/>
        </authorList>
    </citation>
    <scope>NUCLEOTIDE SEQUENCE [MRNA] (ISOFORM 1)</scope>
</reference>
<reference key="2">
    <citation type="journal article" date="1987" name="Proc. Natl. Acad. Sci. U.S.A.">
        <title>A small multigene family encodes Gi signal-transduction proteins.</title>
        <authorList>
            <person name="Beals C.R."/>
            <person name="Wilson C.B."/>
            <person name="Perlmutter R.M."/>
        </authorList>
    </citation>
    <scope>NUCLEOTIDE SEQUENCE [GENOMIC DNA]</scope>
</reference>
<reference key="3">
    <citation type="journal article" date="1988" name="J. Biol. Chem.">
        <title>Presence of three distinct molecular species of Gi protein alpha subunit. Structure of rat cDNAs and human genomic DNAs.</title>
        <authorList>
            <person name="Itoh H."/>
            <person name="Toyama R."/>
            <person name="Kozasa T."/>
            <person name="Tsukamoto T."/>
            <person name="Matsuoka M."/>
            <person name="Kaziro Y."/>
        </authorList>
    </citation>
    <scope>NUCLEOTIDE SEQUENCE [GENOMIC DNA]</scope>
</reference>
<reference key="4">
    <citation type="journal article" date="2007" name="J. Cell Sci.">
        <title>Role of a Galphai2 protein splice variant in the formation of an intracellular dopamine D2 receptor pool.</title>
        <authorList>
            <person name="Lopez-Aranda M.F."/>
            <person name="Acevedo M.J."/>
            <person name="Gutierrez A."/>
            <person name="Koulen P."/>
            <person name="Khan Z.U."/>
        </authorList>
    </citation>
    <scope>NUCLEOTIDE SEQUENCE [MRNA] (ISOFORM SGI2)</scope>
    <scope>FUNCTION (ISOFORM SGI2)</scope>
    <source>
        <tissue>Brain</tissue>
    </source>
</reference>
<reference key="5">
    <citation type="submission" date="2002-03" db="EMBL/GenBank/DDBJ databases">
        <title>cDNA clones of human proteins involved in signal transduction sequenced by the Guthrie cDNA resource center (www.cdna.org).</title>
        <authorList>
            <person name="Puhl H.L. III"/>
            <person name="Ikeda S.R."/>
            <person name="Aronstam R.S."/>
        </authorList>
    </citation>
    <scope>NUCLEOTIDE SEQUENCE [LARGE SCALE MRNA] (ISOFORM 1)</scope>
</reference>
<reference key="6">
    <citation type="journal article" date="2004" name="Nat. Genet.">
        <title>Complete sequencing and characterization of 21,243 full-length human cDNAs.</title>
        <authorList>
            <person name="Ota T."/>
            <person name="Suzuki Y."/>
            <person name="Nishikawa T."/>
            <person name="Otsuki T."/>
            <person name="Sugiyama T."/>
            <person name="Irie R."/>
            <person name="Wakamatsu A."/>
            <person name="Hayashi K."/>
            <person name="Sato H."/>
            <person name="Nagai K."/>
            <person name="Kimura K."/>
            <person name="Makita H."/>
            <person name="Sekine M."/>
            <person name="Obayashi M."/>
            <person name="Nishi T."/>
            <person name="Shibahara T."/>
            <person name="Tanaka T."/>
            <person name="Ishii S."/>
            <person name="Yamamoto J."/>
            <person name="Saito K."/>
            <person name="Kawai Y."/>
            <person name="Isono Y."/>
            <person name="Nakamura Y."/>
            <person name="Nagahari K."/>
            <person name="Murakami K."/>
            <person name="Yasuda T."/>
            <person name="Iwayanagi T."/>
            <person name="Wagatsuma M."/>
            <person name="Shiratori A."/>
            <person name="Sudo H."/>
            <person name="Hosoiri T."/>
            <person name="Kaku Y."/>
            <person name="Kodaira H."/>
            <person name="Kondo H."/>
            <person name="Sugawara M."/>
            <person name="Takahashi M."/>
            <person name="Kanda K."/>
            <person name="Yokoi T."/>
            <person name="Furuya T."/>
            <person name="Kikkawa E."/>
            <person name="Omura Y."/>
            <person name="Abe K."/>
            <person name="Kamihara K."/>
            <person name="Katsuta N."/>
            <person name="Sato K."/>
            <person name="Tanikawa M."/>
            <person name="Yamazaki M."/>
            <person name="Ninomiya K."/>
            <person name="Ishibashi T."/>
            <person name="Yamashita H."/>
            <person name="Murakawa K."/>
            <person name="Fujimori K."/>
            <person name="Tanai H."/>
            <person name="Kimata M."/>
            <person name="Watanabe M."/>
            <person name="Hiraoka S."/>
            <person name="Chiba Y."/>
            <person name="Ishida S."/>
            <person name="Ono Y."/>
            <person name="Takiguchi S."/>
            <person name="Watanabe S."/>
            <person name="Yosida M."/>
            <person name="Hotuta T."/>
            <person name="Kusano J."/>
            <person name="Kanehori K."/>
            <person name="Takahashi-Fujii A."/>
            <person name="Hara H."/>
            <person name="Tanase T.-O."/>
            <person name="Nomura Y."/>
            <person name="Togiya S."/>
            <person name="Komai F."/>
            <person name="Hara R."/>
            <person name="Takeuchi K."/>
            <person name="Arita M."/>
            <person name="Imose N."/>
            <person name="Musashino K."/>
            <person name="Yuuki H."/>
            <person name="Oshima A."/>
            <person name="Sasaki N."/>
            <person name="Aotsuka S."/>
            <person name="Yoshikawa Y."/>
            <person name="Matsunawa H."/>
            <person name="Ichihara T."/>
            <person name="Shiohata N."/>
            <person name="Sano S."/>
            <person name="Moriya S."/>
            <person name="Momiyama H."/>
            <person name="Satoh N."/>
            <person name="Takami S."/>
            <person name="Terashima Y."/>
            <person name="Suzuki O."/>
            <person name="Nakagawa S."/>
            <person name="Senoh A."/>
            <person name="Mizoguchi H."/>
            <person name="Goto Y."/>
            <person name="Shimizu F."/>
            <person name="Wakebe H."/>
            <person name="Hishigaki H."/>
            <person name="Watanabe T."/>
            <person name="Sugiyama A."/>
            <person name="Takemoto M."/>
            <person name="Kawakami B."/>
            <person name="Yamazaki M."/>
            <person name="Watanabe K."/>
            <person name="Kumagai A."/>
            <person name="Itakura S."/>
            <person name="Fukuzumi Y."/>
            <person name="Fujimori Y."/>
            <person name="Komiyama M."/>
            <person name="Tashiro H."/>
            <person name="Tanigami A."/>
            <person name="Fujiwara T."/>
            <person name="Ono T."/>
            <person name="Yamada K."/>
            <person name="Fujii Y."/>
            <person name="Ozaki K."/>
            <person name="Hirao M."/>
            <person name="Ohmori Y."/>
            <person name="Kawabata A."/>
            <person name="Hikiji T."/>
            <person name="Kobatake N."/>
            <person name="Inagaki H."/>
            <person name="Ikema Y."/>
            <person name="Okamoto S."/>
            <person name="Okitani R."/>
            <person name="Kawakami T."/>
            <person name="Noguchi S."/>
            <person name="Itoh T."/>
            <person name="Shigeta K."/>
            <person name="Senba T."/>
            <person name="Matsumura K."/>
            <person name="Nakajima Y."/>
            <person name="Mizuno T."/>
            <person name="Morinaga M."/>
            <person name="Sasaki M."/>
            <person name="Togashi T."/>
            <person name="Oyama M."/>
            <person name="Hata H."/>
            <person name="Watanabe M."/>
            <person name="Komatsu T."/>
            <person name="Mizushima-Sugano J."/>
            <person name="Satoh T."/>
            <person name="Shirai Y."/>
            <person name="Takahashi Y."/>
            <person name="Nakagawa K."/>
            <person name="Okumura K."/>
            <person name="Nagase T."/>
            <person name="Nomura N."/>
            <person name="Kikuchi H."/>
            <person name="Masuho Y."/>
            <person name="Yamashita R."/>
            <person name="Nakai K."/>
            <person name="Yada T."/>
            <person name="Nakamura Y."/>
            <person name="Ohara O."/>
            <person name="Isogai T."/>
            <person name="Sugano S."/>
        </authorList>
    </citation>
    <scope>NUCLEOTIDE SEQUENCE [LARGE SCALE MRNA] (ISOFORMS 3; 5 AND 6)</scope>
    <source>
        <tissue>Brain</tissue>
        <tissue>Teratocarcinoma</tissue>
        <tissue>Testis</tissue>
        <tissue>Uterus</tissue>
    </source>
</reference>
<reference key="7">
    <citation type="journal article" date="2006" name="Nature">
        <title>The DNA sequence, annotation and analysis of human chromosome 3.</title>
        <authorList>
            <person name="Muzny D.M."/>
            <person name="Scherer S.E."/>
            <person name="Kaul R."/>
            <person name="Wang J."/>
            <person name="Yu J."/>
            <person name="Sudbrak R."/>
            <person name="Buhay C.J."/>
            <person name="Chen R."/>
            <person name="Cree A."/>
            <person name="Ding Y."/>
            <person name="Dugan-Rocha S."/>
            <person name="Gill R."/>
            <person name="Gunaratne P."/>
            <person name="Harris R.A."/>
            <person name="Hawes A.C."/>
            <person name="Hernandez J."/>
            <person name="Hodgson A.V."/>
            <person name="Hume J."/>
            <person name="Jackson A."/>
            <person name="Khan Z.M."/>
            <person name="Kovar-Smith C."/>
            <person name="Lewis L.R."/>
            <person name="Lozado R.J."/>
            <person name="Metzker M.L."/>
            <person name="Milosavljevic A."/>
            <person name="Miner G.R."/>
            <person name="Morgan M.B."/>
            <person name="Nazareth L.V."/>
            <person name="Scott G."/>
            <person name="Sodergren E."/>
            <person name="Song X.-Z."/>
            <person name="Steffen D."/>
            <person name="Wei S."/>
            <person name="Wheeler D.A."/>
            <person name="Wright M.W."/>
            <person name="Worley K.C."/>
            <person name="Yuan Y."/>
            <person name="Zhang Z."/>
            <person name="Adams C.Q."/>
            <person name="Ansari-Lari M.A."/>
            <person name="Ayele M."/>
            <person name="Brown M.J."/>
            <person name="Chen G."/>
            <person name="Chen Z."/>
            <person name="Clendenning J."/>
            <person name="Clerc-Blankenburg K.P."/>
            <person name="Chen R."/>
            <person name="Chen Z."/>
            <person name="Davis C."/>
            <person name="Delgado O."/>
            <person name="Dinh H.H."/>
            <person name="Dong W."/>
            <person name="Draper H."/>
            <person name="Ernst S."/>
            <person name="Fu G."/>
            <person name="Gonzalez-Garay M.L."/>
            <person name="Garcia D.K."/>
            <person name="Gillett W."/>
            <person name="Gu J."/>
            <person name="Hao B."/>
            <person name="Haugen E."/>
            <person name="Havlak P."/>
            <person name="He X."/>
            <person name="Hennig S."/>
            <person name="Hu S."/>
            <person name="Huang W."/>
            <person name="Jackson L.R."/>
            <person name="Jacob L.S."/>
            <person name="Kelly S.H."/>
            <person name="Kube M."/>
            <person name="Levy R."/>
            <person name="Li Z."/>
            <person name="Liu B."/>
            <person name="Liu J."/>
            <person name="Liu W."/>
            <person name="Lu J."/>
            <person name="Maheshwari M."/>
            <person name="Nguyen B.-V."/>
            <person name="Okwuonu G.O."/>
            <person name="Palmeiri A."/>
            <person name="Pasternak S."/>
            <person name="Perez L.M."/>
            <person name="Phelps K.A."/>
            <person name="Plopper F.J."/>
            <person name="Qiang B."/>
            <person name="Raymond C."/>
            <person name="Rodriguez R."/>
            <person name="Saenphimmachak C."/>
            <person name="Santibanez J."/>
            <person name="Shen H."/>
            <person name="Shen Y."/>
            <person name="Subramanian S."/>
            <person name="Tabor P.E."/>
            <person name="Verduzco D."/>
            <person name="Waldron L."/>
            <person name="Wang J."/>
            <person name="Wang J."/>
            <person name="Wang Q."/>
            <person name="Williams G.A."/>
            <person name="Wong G.K.-S."/>
            <person name="Yao Z."/>
            <person name="Zhang J."/>
            <person name="Zhang X."/>
            <person name="Zhao G."/>
            <person name="Zhou J."/>
            <person name="Zhou Y."/>
            <person name="Nelson D."/>
            <person name="Lehrach H."/>
            <person name="Reinhardt R."/>
            <person name="Naylor S.L."/>
            <person name="Yang H."/>
            <person name="Olson M."/>
            <person name="Weinstock G."/>
            <person name="Gibbs R.A."/>
        </authorList>
    </citation>
    <scope>NUCLEOTIDE SEQUENCE [LARGE SCALE GENOMIC DNA]</scope>
</reference>
<reference key="8">
    <citation type="submission" date="2005-07" db="EMBL/GenBank/DDBJ databases">
        <authorList>
            <person name="Mural R.J."/>
            <person name="Istrail S."/>
            <person name="Sutton G."/>
            <person name="Florea L."/>
            <person name="Halpern A.L."/>
            <person name="Mobarry C.M."/>
            <person name="Lippert R."/>
            <person name="Walenz B."/>
            <person name="Shatkay H."/>
            <person name="Dew I."/>
            <person name="Miller J.R."/>
            <person name="Flanigan M.J."/>
            <person name="Edwards N.J."/>
            <person name="Bolanos R."/>
            <person name="Fasulo D."/>
            <person name="Halldorsson B.V."/>
            <person name="Hannenhalli S."/>
            <person name="Turner R."/>
            <person name="Yooseph S."/>
            <person name="Lu F."/>
            <person name="Nusskern D.R."/>
            <person name="Shue B.C."/>
            <person name="Zheng X.H."/>
            <person name="Zhong F."/>
            <person name="Delcher A.L."/>
            <person name="Huson D.H."/>
            <person name="Kravitz S.A."/>
            <person name="Mouchard L."/>
            <person name="Reinert K."/>
            <person name="Remington K.A."/>
            <person name="Clark A.G."/>
            <person name="Waterman M.S."/>
            <person name="Eichler E.E."/>
            <person name="Adams M.D."/>
            <person name="Hunkapiller M.W."/>
            <person name="Myers E.W."/>
            <person name="Venter J.C."/>
        </authorList>
    </citation>
    <scope>NUCLEOTIDE SEQUENCE [LARGE SCALE GENOMIC DNA]</scope>
</reference>
<reference key="9">
    <citation type="journal article" date="2004" name="Genome Res.">
        <title>The status, quality, and expansion of the NIH full-length cDNA project: the Mammalian Gene Collection (MGC).</title>
        <authorList>
            <consortium name="The MGC Project Team"/>
        </authorList>
    </citation>
    <scope>NUCLEOTIDE SEQUENCE [LARGE SCALE MRNA] (ISOFORMS 1 AND 2)</scope>
    <source>
        <tissue>Kidney</tissue>
        <tissue>Mammary gland</tissue>
    </source>
</reference>
<reference key="10">
    <citation type="journal article" date="1988" name="FEBS Lett.">
        <title>Cloning and characterization of the human gene for the alpha-subunit of Gi2, a GTP-binding signal transduction protein.</title>
        <authorList>
            <person name="Weinstein L.S."/>
            <person name="Spiegel A.M."/>
            <person name="Carter A.D."/>
        </authorList>
    </citation>
    <scope>NUCLEOTIDE SEQUENCE [GENOMIC DNA] OF 1-39</scope>
</reference>
<reference key="11">
    <citation type="journal article" date="1996" name="J. Biol. Chem.">
        <title>Physical association of Gi2alpha with interleukin-8 receptors.</title>
        <authorList>
            <person name="Damaj B.B."/>
            <person name="McColl S.R."/>
            <person name="Mahana W."/>
            <person name="Crouch M.F."/>
            <person name="Naccache P.H."/>
        </authorList>
    </citation>
    <scope>INTERACTION WITH CXCR1 AND CXCR2</scope>
</reference>
<reference key="12">
    <citation type="journal article" date="2002" name="Biochem. Biophys. Res. Commun.">
        <title>Modulation of G(ialpha(2)) signaling by the axonal guidance molecule UNC5H2.</title>
        <authorList>
            <person name="Komatsuzaki K."/>
            <person name="Dalvin S."/>
            <person name="Kinane T.B."/>
        </authorList>
    </citation>
    <scope>INTERACTION WITH UNC5B</scope>
</reference>
<reference key="13">
    <citation type="journal article" date="2007" name="J. Cell Biol.">
        <title>Localization of Gi alpha proteins in the centrosomes and at the midbody: implication for their role in cell division.</title>
        <authorList>
            <person name="Cho H."/>
            <person name="Kehrl J.H."/>
        </authorList>
    </citation>
    <scope>FUNCTION</scope>
    <scope>SUBCELLULAR LOCATION</scope>
</reference>
<reference key="14">
    <citation type="journal article" date="2009" name="Proc. Natl. Acad. Sci. U.S.A.">
        <title>GIV is a nonreceptor GEF for G alpha i with a unique motif that regulates Akt signaling.</title>
        <authorList>
            <person name="Garcia-Marcos M."/>
            <person name="Ghosh P."/>
            <person name="Farquhar M.G."/>
        </authorList>
    </citation>
    <scope>INTERACTION WITH CCDC88A</scope>
</reference>
<reference key="15">
    <citation type="journal article" date="2011" name="BMC Syst. Biol.">
        <title>Initial characterization of the human central proteome.</title>
        <authorList>
            <person name="Burkard T.R."/>
            <person name="Planyavsky M."/>
            <person name="Kaupe I."/>
            <person name="Breitwieser F.P."/>
            <person name="Buerckstuemmer T."/>
            <person name="Bennett K.L."/>
            <person name="Superti-Furga G."/>
            <person name="Colinge J."/>
        </authorList>
    </citation>
    <scope>IDENTIFICATION BY MASS SPECTROMETRY [LARGE SCALE ANALYSIS]</scope>
</reference>
<reference key="16">
    <citation type="journal article" date="2012" name="Mol. Cell. Proteomics">
        <title>Comparative large-scale characterisation of plant vs. mammal proteins reveals similar and idiosyncratic N-alpha acetylation features.</title>
        <authorList>
            <person name="Bienvenut W.V."/>
            <person name="Sumpton D."/>
            <person name="Martinez A."/>
            <person name="Lilla S."/>
            <person name="Espagne C."/>
            <person name="Meinnel T."/>
            <person name="Giglione C."/>
        </authorList>
    </citation>
    <scope>MYRISTOYLATION AT GLY-2</scope>
    <scope>CLEAVAGE OF INITIATOR METHIONINE [LARGE SCALE ANALYSIS]</scope>
    <scope>IDENTIFICATION BY MASS SPECTROMETRY [LARGE SCALE ANALYSIS]</scope>
</reference>
<reference key="17">
    <citation type="journal article" date="2013" name="Nat. Struct. Mol. Biol.">
        <title>A bacterial toxin catalyzing tyrosine glycosylation of Rho and deamidation of Gq and Gi proteins.</title>
        <authorList>
            <person name="Jank T."/>
            <person name="Bogdanovic X."/>
            <person name="Wirth C."/>
            <person name="Haaf E."/>
            <person name="Spoerner M."/>
            <person name="Boehmer K.E."/>
            <person name="Steinemann M."/>
            <person name="Orth J.H."/>
            <person name="Kalbitzer H.R."/>
            <person name="Warscheid B."/>
            <person name="Hunte C."/>
            <person name="Aktories K."/>
        </authorList>
    </citation>
    <scope>DEAMIDATION AT GLN-205 (MICROBIAL INFECTION)</scope>
</reference>
<reference key="18">
    <citation type="journal article" date="2014" name="J. Proteomics">
        <title>An enzyme assisted RP-RPLC approach for in-depth analysis of human liver phosphoproteome.</title>
        <authorList>
            <person name="Bian Y."/>
            <person name="Song C."/>
            <person name="Cheng K."/>
            <person name="Dong M."/>
            <person name="Wang F."/>
            <person name="Huang J."/>
            <person name="Sun D."/>
            <person name="Wang L."/>
            <person name="Ye M."/>
            <person name="Zou H."/>
        </authorList>
    </citation>
    <scope>IDENTIFICATION BY MASS SPECTROMETRY [LARGE SCALE ANALYSIS]</scope>
    <source>
        <tissue>Liver</tissue>
    </source>
</reference>
<reference key="19">
    <citation type="journal article" date="2014" name="Nat. Commun.">
        <title>Global profiling of co- and post-translationally N-myristoylated proteomes in human cells.</title>
        <authorList>
            <person name="Thinon E."/>
            <person name="Serwa R.A."/>
            <person name="Broncel M."/>
            <person name="Brannigan J.A."/>
            <person name="Brassat U."/>
            <person name="Wright M.H."/>
            <person name="Heal W.P."/>
            <person name="Wilkinson A.J."/>
            <person name="Mann D.J."/>
            <person name="Tate E.W."/>
        </authorList>
    </citation>
    <scope>MYRISTOYLATION AT GLY-2</scope>
    <scope>CLEAVAGE OF INITIATOR METHIONINE</scope>
    <scope>IDENTIFICATION BY MASS SPECTROMETRY</scope>
</reference>
<reference key="20">
    <citation type="journal article" date="2015" name="Angew. Chem. Int. Ed.">
        <title>Multifunctional reagents for quantitative proteome-wide analysis of protein modification in human cells and dynamic profiling of protein lipidation during vertebrate development.</title>
        <authorList>
            <person name="Broncel M."/>
            <person name="Serwa R.A."/>
            <person name="Ciepla P."/>
            <person name="Krause E."/>
            <person name="Dallman M.J."/>
            <person name="Magee A.I."/>
            <person name="Tate E.W."/>
        </authorList>
    </citation>
    <scope>MYRISTOYLATION AT GLY-2</scope>
    <scope>CLEAVAGE OF INITIATOR METHIONINE</scope>
    <scope>IDENTIFICATION BY MASS SPECTROMETRY</scope>
</reference>
<reference key="21">
    <citation type="journal article" date="2015" name="Elife">
        <title>Daple is a novel non-receptor GEF required for trimeric G protein activation in Wnt signaling.</title>
        <authorList>
            <person name="Aznar N."/>
            <person name="Midde K.K."/>
            <person name="Dunkel Y."/>
            <person name="Lopez-Sanchez I."/>
            <person name="Pavlova Y."/>
            <person name="Marivin A."/>
            <person name="Barbazan J."/>
            <person name="Murray F."/>
            <person name="Nitsche U."/>
            <person name="Janssen K.P."/>
            <person name="Willert K."/>
            <person name="Goel A."/>
            <person name="Abal M."/>
            <person name="Garcia-Marcos M."/>
            <person name="Ghosh P."/>
        </authorList>
    </citation>
    <scope>INTERACTION WITH CCDC88C</scope>
</reference>
<reference key="22">
    <citation type="journal article" date="2015" name="Proteomics">
        <title>N-terminome analysis of the human mitochondrial proteome.</title>
        <authorList>
            <person name="Vaca Jacome A.S."/>
            <person name="Rabilloud T."/>
            <person name="Schaeffer-Reiss C."/>
            <person name="Rompais M."/>
            <person name="Ayoub D."/>
            <person name="Lane L."/>
            <person name="Bairoch A."/>
            <person name="Van Dorsselaer A."/>
            <person name="Carapito C."/>
        </authorList>
    </citation>
    <scope>IDENTIFICATION BY MASS SPECTROMETRY [LARGE SCALE ANALYSIS]</scope>
</reference>
<reference key="23">
    <citation type="journal article" date="2017" name="Circ. Res.">
        <title>A Mutation in the G-Protein Gene GNB2 Causes Familial Sinus Node and Atrioventricular Conduction Dysfunction.</title>
        <authorList>
            <person name="Stallmeyer B."/>
            <person name="Kuss J."/>
            <person name="Kotthoff S."/>
            <person name="Zumhagen S."/>
            <person name="Vowinkel K."/>
            <person name="Rinne S."/>
            <person name="Matschke L.A."/>
            <person name="Friedrich C."/>
            <person name="Schulze-Bahr E."/>
            <person name="Rust S."/>
            <person name="Seebohm G."/>
            <person name="Decher N."/>
            <person name="Schulze-Bahr E."/>
        </authorList>
    </citation>
    <scope>INTERACTION WITH GNB2</scope>
</reference>
<protein>
    <recommendedName>
        <fullName>Guanine nucleotide-binding protein G(i) subunit alpha-2</fullName>
    </recommendedName>
    <alternativeName>
        <fullName>Adenylate cyclase-inhibiting G alpha protein</fullName>
    </alternativeName>
</protein>